<evidence type="ECO:0000255" key="1"/>
<evidence type="ECO:0000255" key="2">
    <source>
        <dbReference type="PROSITE-ProRule" id="PRU10138"/>
    </source>
</evidence>
<evidence type="ECO:0000256" key="3">
    <source>
        <dbReference type="SAM" id="MobiDB-lite"/>
    </source>
</evidence>
<evidence type="ECO:0000305" key="4"/>
<feature type="signal peptide" evidence="1">
    <location>
        <begin position="1"/>
        <end position="28"/>
    </location>
</feature>
<feature type="chain" id="PRO_0000013590" description="Luminal-binding protein">
    <location>
        <begin position="29"/>
        <end position="666"/>
    </location>
</feature>
<feature type="region of interest" description="Disordered" evidence="3">
    <location>
        <begin position="644"/>
        <end position="666"/>
    </location>
</feature>
<feature type="short sequence motif" description="Prevents secretion from ER" evidence="2">
    <location>
        <begin position="663"/>
        <end position="666"/>
    </location>
</feature>
<feature type="compositionally biased region" description="Acidic residues" evidence="3">
    <location>
        <begin position="656"/>
        <end position="666"/>
    </location>
</feature>
<feature type="glycosylation site" description="N-linked (GlcNAc...) asparagine" evidence="1">
    <location>
        <position position="617"/>
    </location>
</feature>
<protein>
    <recommendedName>
        <fullName>Luminal-binding protein</fullName>
        <shortName>BiP</shortName>
    </recommendedName>
    <alternativeName>
        <fullName>78 kDa glucose-regulated protein homolog</fullName>
        <shortName>GRP-78</shortName>
    </alternativeName>
</protein>
<organism>
    <name type="scientific">Solanum lycopersicum</name>
    <name type="common">Tomato</name>
    <name type="synonym">Lycopersicon esculentum</name>
    <dbReference type="NCBI Taxonomy" id="4081"/>
    <lineage>
        <taxon>Eukaryota</taxon>
        <taxon>Viridiplantae</taxon>
        <taxon>Streptophyta</taxon>
        <taxon>Embryophyta</taxon>
        <taxon>Tracheophyta</taxon>
        <taxon>Spermatophyta</taxon>
        <taxon>Magnoliopsida</taxon>
        <taxon>eudicotyledons</taxon>
        <taxon>Gunneridae</taxon>
        <taxon>Pentapetalae</taxon>
        <taxon>asterids</taxon>
        <taxon>lamiids</taxon>
        <taxon>Solanales</taxon>
        <taxon>Solanaceae</taxon>
        <taxon>Solanoideae</taxon>
        <taxon>Solaneae</taxon>
        <taxon>Solanum</taxon>
        <taxon>Solanum subgen. Lycopersicon</taxon>
    </lineage>
</organism>
<reference key="1">
    <citation type="submission" date="1993-01" db="EMBL/GenBank/DDBJ databases">
        <title>Characterization of the tomato endoplasmic reticulum-localized BiP/GRP78 homolog.</title>
        <authorList>
            <person name="Meyer D.J."/>
            <person name="Ewing N.N."/>
            <person name="Rosichan J.L."/>
            <person name="Bennett A.B."/>
        </authorList>
    </citation>
    <scope>NUCLEOTIDE SEQUENCE [GENOMIC DNA / MRNA]</scope>
    <source>
        <strain>cv. VFNT Cherry</strain>
    </source>
</reference>
<dbReference type="EMBL" id="L08830">
    <property type="protein sequence ID" value="AAA34139.1"/>
    <property type="molecule type" value="mRNA"/>
</dbReference>
<dbReference type="EMBL" id="L08829">
    <property type="protein sequence ID" value="AAA99920.1"/>
    <property type="molecule type" value="Genomic_DNA"/>
</dbReference>
<dbReference type="SMR" id="P49118"/>
<dbReference type="FunCoup" id="P49118">
    <property type="interactions" value="2518"/>
</dbReference>
<dbReference type="STRING" id="4081.P49118"/>
<dbReference type="PaxDb" id="4081-Solyc08g082820.2.1"/>
<dbReference type="ProMEX" id="P49118"/>
<dbReference type="eggNOG" id="KOG0100">
    <property type="taxonomic scope" value="Eukaryota"/>
</dbReference>
<dbReference type="InParanoid" id="P49118"/>
<dbReference type="Proteomes" id="UP000004994">
    <property type="component" value="Unplaced"/>
</dbReference>
<dbReference type="ExpressionAtlas" id="P49118">
    <property type="expression patterns" value="baseline and differential"/>
</dbReference>
<dbReference type="GO" id="GO:0005737">
    <property type="term" value="C:cytoplasm"/>
    <property type="evidence" value="ECO:0000318"/>
    <property type="project" value="GO_Central"/>
</dbReference>
<dbReference type="GO" id="GO:0034663">
    <property type="term" value="C:endoplasmic reticulum chaperone complex"/>
    <property type="evidence" value="ECO:0000318"/>
    <property type="project" value="GO_Central"/>
</dbReference>
<dbReference type="GO" id="GO:0005788">
    <property type="term" value="C:endoplasmic reticulum lumen"/>
    <property type="evidence" value="ECO:0000318"/>
    <property type="project" value="GO_Central"/>
</dbReference>
<dbReference type="GO" id="GO:0016020">
    <property type="term" value="C:membrane"/>
    <property type="evidence" value="ECO:0000318"/>
    <property type="project" value="GO_Central"/>
</dbReference>
<dbReference type="GO" id="GO:0005634">
    <property type="term" value="C:nucleus"/>
    <property type="evidence" value="ECO:0000318"/>
    <property type="project" value="GO_Central"/>
</dbReference>
<dbReference type="GO" id="GO:0005524">
    <property type="term" value="F:ATP binding"/>
    <property type="evidence" value="ECO:0007669"/>
    <property type="project" value="UniProtKB-KW"/>
</dbReference>
<dbReference type="GO" id="GO:0016887">
    <property type="term" value="F:ATP hydrolysis activity"/>
    <property type="evidence" value="ECO:0000318"/>
    <property type="project" value="GO_Central"/>
</dbReference>
<dbReference type="GO" id="GO:0140662">
    <property type="term" value="F:ATP-dependent protein folding chaperone"/>
    <property type="evidence" value="ECO:0007669"/>
    <property type="project" value="InterPro"/>
</dbReference>
<dbReference type="GO" id="GO:0031072">
    <property type="term" value="F:heat shock protein binding"/>
    <property type="evidence" value="ECO:0000318"/>
    <property type="project" value="GO_Central"/>
</dbReference>
<dbReference type="GO" id="GO:0044183">
    <property type="term" value="F:protein folding chaperone"/>
    <property type="evidence" value="ECO:0000318"/>
    <property type="project" value="GO_Central"/>
</dbReference>
<dbReference type="GO" id="GO:0051085">
    <property type="term" value="P:chaperone cofactor-dependent protein refolding"/>
    <property type="evidence" value="ECO:0000318"/>
    <property type="project" value="GO_Central"/>
</dbReference>
<dbReference type="GO" id="GO:0030968">
    <property type="term" value="P:endoplasmic reticulum unfolded protein response"/>
    <property type="evidence" value="ECO:0000318"/>
    <property type="project" value="GO_Central"/>
</dbReference>
<dbReference type="GO" id="GO:0036503">
    <property type="term" value="P:ERAD pathway"/>
    <property type="evidence" value="ECO:0000318"/>
    <property type="project" value="GO_Central"/>
</dbReference>
<dbReference type="GO" id="GO:0042026">
    <property type="term" value="P:protein refolding"/>
    <property type="evidence" value="ECO:0000318"/>
    <property type="project" value="GO_Central"/>
</dbReference>
<dbReference type="CDD" id="cd10241">
    <property type="entry name" value="ASKHA_NBD_HSP70_BiP"/>
    <property type="match status" value="1"/>
</dbReference>
<dbReference type="FunFam" id="3.30.420.40:FF:000020">
    <property type="entry name" value="Chaperone protein HscA homolog"/>
    <property type="match status" value="1"/>
</dbReference>
<dbReference type="FunFam" id="3.90.640.10:FF:000153">
    <property type="entry name" value="Endoplasmic reticulum chaperone BiP"/>
    <property type="match status" value="1"/>
</dbReference>
<dbReference type="FunFam" id="2.60.34.10:FF:000002">
    <property type="entry name" value="Heat shock 70 kDa"/>
    <property type="match status" value="1"/>
</dbReference>
<dbReference type="FunFam" id="3.30.420.40:FF:000026">
    <property type="entry name" value="Heat shock protein 70"/>
    <property type="match status" value="1"/>
</dbReference>
<dbReference type="FunFam" id="3.30.30.30:FF:000005">
    <property type="entry name" value="Heat shock protein ssb1"/>
    <property type="match status" value="1"/>
</dbReference>
<dbReference type="FunFam" id="1.20.1270.10:FF:000015">
    <property type="entry name" value="Luminal-binding protein 5"/>
    <property type="match status" value="1"/>
</dbReference>
<dbReference type="Gene3D" id="1.20.1270.10">
    <property type="match status" value="1"/>
</dbReference>
<dbReference type="Gene3D" id="3.30.420.40">
    <property type="match status" value="2"/>
</dbReference>
<dbReference type="Gene3D" id="3.90.640.10">
    <property type="entry name" value="Actin, Chain A, domain 4"/>
    <property type="match status" value="1"/>
</dbReference>
<dbReference type="Gene3D" id="2.60.34.10">
    <property type="entry name" value="Substrate Binding Domain Of DNAk, Chain A, domain 1"/>
    <property type="match status" value="1"/>
</dbReference>
<dbReference type="InterPro" id="IPR043129">
    <property type="entry name" value="ATPase_NBD"/>
</dbReference>
<dbReference type="InterPro" id="IPR042050">
    <property type="entry name" value="BIP_NBD"/>
</dbReference>
<dbReference type="InterPro" id="IPR018181">
    <property type="entry name" value="Heat_shock_70_CS"/>
</dbReference>
<dbReference type="InterPro" id="IPR029048">
    <property type="entry name" value="HSP70_C_sf"/>
</dbReference>
<dbReference type="InterPro" id="IPR029047">
    <property type="entry name" value="HSP70_peptide-bd_sf"/>
</dbReference>
<dbReference type="InterPro" id="IPR013126">
    <property type="entry name" value="Hsp_70_fam"/>
</dbReference>
<dbReference type="NCBIfam" id="NF001413">
    <property type="entry name" value="PRK00290.1"/>
    <property type="match status" value="1"/>
</dbReference>
<dbReference type="PANTHER" id="PTHR19375">
    <property type="entry name" value="HEAT SHOCK PROTEIN 70KDA"/>
    <property type="match status" value="1"/>
</dbReference>
<dbReference type="Pfam" id="PF00012">
    <property type="entry name" value="HSP70"/>
    <property type="match status" value="1"/>
</dbReference>
<dbReference type="PRINTS" id="PR00301">
    <property type="entry name" value="HEATSHOCK70"/>
</dbReference>
<dbReference type="SUPFAM" id="SSF53067">
    <property type="entry name" value="Actin-like ATPase domain"/>
    <property type="match status" value="2"/>
</dbReference>
<dbReference type="SUPFAM" id="SSF100934">
    <property type="entry name" value="Heat shock protein 70kD (HSP70), C-terminal subdomain"/>
    <property type="match status" value="1"/>
</dbReference>
<dbReference type="SUPFAM" id="SSF100920">
    <property type="entry name" value="Heat shock protein 70kD (HSP70), peptide-binding domain"/>
    <property type="match status" value="1"/>
</dbReference>
<dbReference type="PROSITE" id="PS00014">
    <property type="entry name" value="ER_TARGET"/>
    <property type="match status" value="1"/>
</dbReference>
<dbReference type="PROSITE" id="PS00297">
    <property type="entry name" value="HSP70_1"/>
    <property type="match status" value="1"/>
</dbReference>
<dbReference type="PROSITE" id="PS00329">
    <property type="entry name" value="HSP70_2"/>
    <property type="match status" value="1"/>
</dbReference>
<dbReference type="PROSITE" id="PS01036">
    <property type="entry name" value="HSP70_3"/>
    <property type="match status" value="1"/>
</dbReference>
<sequence>MAACSRRGNSLVVLAIVLLGCLSALSNAKEEATKLGTVIGIDLGTTYSCVGVYKNGHVEIIANDQGNRITPSWVAFTDNERLIGEAAKNLAAVNPERTIFDVKRLIGRKFEDKEVQRDMKLVPYKIVSKDGKPYIQVKIKDGEVKVFSPEEISAMILTKMKETAEAFLGKTIKDAVVTVPAYFNDAQRQATKDAGVIAGLNVARIINEPTAAAIAYGLDKKGGEKNILVFDLGGGTFDVSILTIDNGVFEVLATNGDTHLGGEDFDQRIMEYFIKLIKKKHGKDISKDNRALGKLRREAERAKRSLSSQHQVRVEIESLFDGTDFSEPLTRARFEELNNDLFRKTMGPVKKAMDDAGLQKNQIDEIVLVGGSTRIPKVQQLLKDYFDGKEPSKGVNPDEAVAYGAAVQGGILSGEGGDETKDILLLDVAPLTLGIETVGGVMTKFIPRNTVIPTKKSQVFTTYQDQQTTVSIQVFEGERSLTKDCRNLGKFDLTGIPPAPRGTPQIEVTFEVDANGILNVKAEDKGTGKAEKITITNDKGRLSQEEIERMVREAEEFAEEDKKVKEKIDARNALETYVYNMKNQINDKDKLADKLESDEKEKIETATKEALEWLDDNQSAEKEDYDEKLKEVEAVCNPIITAVYQRSGGAPGGGASEEEDDSHDEL</sequence>
<accession>P49118</accession>
<name>BIP_SOLLC</name>
<keyword id="KW-0067">ATP-binding</keyword>
<keyword id="KW-0256">Endoplasmic reticulum</keyword>
<keyword id="KW-0325">Glycoprotein</keyword>
<keyword id="KW-0547">Nucleotide-binding</keyword>
<keyword id="KW-1185">Reference proteome</keyword>
<keyword id="KW-0732">Signal</keyword>
<comment type="function">
    <text>Probably plays a role in facilitating the assembly of multimeric protein complexes inside the ER.</text>
</comment>
<comment type="subcellular location">
    <subcellularLocation>
        <location>Endoplasmic reticulum lumen</location>
    </subcellularLocation>
</comment>
<comment type="similarity">
    <text evidence="4">Belongs to the heat shock protein 70 family.</text>
</comment>
<proteinExistence type="evidence at transcript level"/>